<accession>B3GYU6</accession>
<sequence>MALNLQDKQAIVAEVNEAAKGALSAVVADSRGVTVEKMTELRKSAREAGVTMRVVRNTLLRRAVEGTEFECLTDTFTGPTLIAFSHEHPGAAARLFTEFAKANKEFELKGAAFEGKVQDVEFLATLPTYEEAIARLMGTMKEAAAGKLVRTLAALRDKLQEAA</sequence>
<protein>
    <recommendedName>
        <fullName evidence="1">Large ribosomal subunit protein uL10</fullName>
    </recommendedName>
    <alternativeName>
        <fullName evidence="2">50S ribosomal protein L10</fullName>
    </alternativeName>
</protein>
<feature type="chain" id="PRO_1000120907" description="Large ribosomal subunit protein uL10">
    <location>
        <begin position="1"/>
        <end position="163"/>
    </location>
</feature>
<organism>
    <name type="scientific">Actinobacillus pleuropneumoniae serotype 7 (strain AP76)</name>
    <dbReference type="NCBI Taxonomy" id="537457"/>
    <lineage>
        <taxon>Bacteria</taxon>
        <taxon>Pseudomonadati</taxon>
        <taxon>Pseudomonadota</taxon>
        <taxon>Gammaproteobacteria</taxon>
        <taxon>Pasteurellales</taxon>
        <taxon>Pasteurellaceae</taxon>
        <taxon>Actinobacillus</taxon>
    </lineage>
</organism>
<gene>
    <name evidence="1" type="primary">rplJ</name>
    <name type="ordered locus">APP7_1780</name>
</gene>
<evidence type="ECO:0000255" key="1">
    <source>
        <dbReference type="HAMAP-Rule" id="MF_00362"/>
    </source>
</evidence>
<evidence type="ECO:0000305" key="2"/>
<comment type="function">
    <text evidence="1">Forms part of the ribosomal stalk, playing a central role in the interaction of the ribosome with GTP-bound translation factors.</text>
</comment>
<comment type="subunit">
    <text evidence="1">Part of the ribosomal stalk of the 50S ribosomal subunit. The N-terminus interacts with L11 and the large rRNA to form the base of the stalk. The C-terminus forms an elongated spine to which L12 dimers bind in a sequential fashion forming a multimeric L10(L12)X complex.</text>
</comment>
<comment type="similarity">
    <text evidence="1">Belongs to the universal ribosomal protein uL10 family.</text>
</comment>
<reference key="1">
    <citation type="submission" date="2008-06" db="EMBL/GenBank/DDBJ databases">
        <title>Genome and proteome analysis of A. pleuropneumoniae serotype 7.</title>
        <authorList>
            <person name="Linke B."/>
            <person name="Buettner F."/>
            <person name="Martinez-Arias R."/>
            <person name="Goesmann A."/>
            <person name="Baltes N."/>
            <person name="Tegetmeyer H."/>
            <person name="Singh M."/>
            <person name="Gerlach G.F."/>
        </authorList>
    </citation>
    <scope>NUCLEOTIDE SEQUENCE [LARGE SCALE GENOMIC DNA]</scope>
    <source>
        <strain>AP76</strain>
    </source>
</reference>
<proteinExistence type="inferred from homology"/>
<name>RL10_ACTP7</name>
<dbReference type="EMBL" id="CP001091">
    <property type="protein sequence ID" value="ACE62432.1"/>
    <property type="molecule type" value="Genomic_DNA"/>
</dbReference>
<dbReference type="RefSeq" id="WP_005619364.1">
    <property type="nucleotide sequence ID" value="NC_010939.1"/>
</dbReference>
<dbReference type="SMR" id="B3GYU6"/>
<dbReference type="GeneID" id="48600008"/>
<dbReference type="KEGG" id="apa:APP7_1780"/>
<dbReference type="HOGENOM" id="CLU_092227_0_2_6"/>
<dbReference type="Proteomes" id="UP000001226">
    <property type="component" value="Chromosome"/>
</dbReference>
<dbReference type="GO" id="GO:0015934">
    <property type="term" value="C:large ribosomal subunit"/>
    <property type="evidence" value="ECO:0007669"/>
    <property type="project" value="InterPro"/>
</dbReference>
<dbReference type="GO" id="GO:0070180">
    <property type="term" value="F:large ribosomal subunit rRNA binding"/>
    <property type="evidence" value="ECO:0007669"/>
    <property type="project" value="UniProtKB-UniRule"/>
</dbReference>
<dbReference type="GO" id="GO:0003735">
    <property type="term" value="F:structural constituent of ribosome"/>
    <property type="evidence" value="ECO:0007669"/>
    <property type="project" value="InterPro"/>
</dbReference>
<dbReference type="GO" id="GO:0006412">
    <property type="term" value="P:translation"/>
    <property type="evidence" value="ECO:0007669"/>
    <property type="project" value="UniProtKB-UniRule"/>
</dbReference>
<dbReference type="CDD" id="cd05797">
    <property type="entry name" value="Ribosomal_L10"/>
    <property type="match status" value="1"/>
</dbReference>
<dbReference type="FunFam" id="3.30.70.1730:FF:000001">
    <property type="entry name" value="50S ribosomal protein L10"/>
    <property type="match status" value="1"/>
</dbReference>
<dbReference type="Gene3D" id="3.30.70.1730">
    <property type="match status" value="1"/>
</dbReference>
<dbReference type="Gene3D" id="6.10.250.2350">
    <property type="match status" value="1"/>
</dbReference>
<dbReference type="HAMAP" id="MF_00362">
    <property type="entry name" value="Ribosomal_uL10"/>
    <property type="match status" value="1"/>
</dbReference>
<dbReference type="InterPro" id="IPR001790">
    <property type="entry name" value="Ribosomal_uL10"/>
</dbReference>
<dbReference type="InterPro" id="IPR043141">
    <property type="entry name" value="Ribosomal_uL10-like_sf"/>
</dbReference>
<dbReference type="InterPro" id="IPR022973">
    <property type="entry name" value="Ribosomal_uL10_bac"/>
</dbReference>
<dbReference type="InterPro" id="IPR047865">
    <property type="entry name" value="Ribosomal_uL10_bac_type"/>
</dbReference>
<dbReference type="InterPro" id="IPR002363">
    <property type="entry name" value="Ribosomal_uL10_CS_bac"/>
</dbReference>
<dbReference type="NCBIfam" id="NF000955">
    <property type="entry name" value="PRK00099.1-1"/>
    <property type="match status" value="1"/>
</dbReference>
<dbReference type="PANTHER" id="PTHR11560">
    <property type="entry name" value="39S RIBOSOMAL PROTEIN L10, MITOCHONDRIAL"/>
    <property type="match status" value="1"/>
</dbReference>
<dbReference type="Pfam" id="PF00466">
    <property type="entry name" value="Ribosomal_L10"/>
    <property type="match status" value="1"/>
</dbReference>
<dbReference type="SUPFAM" id="SSF160369">
    <property type="entry name" value="Ribosomal protein L10-like"/>
    <property type="match status" value="1"/>
</dbReference>
<dbReference type="PROSITE" id="PS01109">
    <property type="entry name" value="RIBOSOMAL_L10"/>
    <property type="match status" value="1"/>
</dbReference>
<keyword id="KW-0687">Ribonucleoprotein</keyword>
<keyword id="KW-0689">Ribosomal protein</keyword>
<keyword id="KW-0694">RNA-binding</keyword>
<keyword id="KW-0699">rRNA-binding</keyword>